<organism>
    <name type="scientific">Schizosaccharomyces pombe (strain 972 / ATCC 24843)</name>
    <name type="common">Fission yeast</name>
    <dbReference type="NCBI Taxonomy" id="284812"/>
    <lineage>
        <taxon>Eukaryota</taxon>
        <taxon>Fungi</taxon>
        <taxon>Dikarya</taxon>
        <taxon>Ascomycota</taxon>
        <taxon>Taphrinomycotina</taxon>
        <taxon>Schizosaccharomycetes</taxon>
        <taxon>Schizosaccharomycetales</taxon>
        <taxon>Schizosaccharomycetaceae</taxon>
        <taxon>Schizosaccharomyces</taxon>
    </lineage>
</organism>
<comment type="catalytic activity">
    <reaction>
        <text>(S)-lactate + NAD(+) = pyruvate + NADH + H(+)</text>
        <dbReference type="Rhea" id="RHEA:23444"/>
        <dbReference type="ChEBI" id="CHEBI:15361"/>
        <dbReference type="ChEBI" id="CHEBI:15378"/>
        <dbReference type="ChEBI" id="CHEBI:16651"/>
        <dbReference type="ChEBI" id="CHEBI:57540"/>
        <dbReference type="ChEBI" id="CHEBI:57945"/>
        <dbReference type="EC" id="1.1.1.27"/>
    </reaction>
</comment>
<comment type="pathway">
    <text>Fermentation; pyruvate fermentation to lactate; (S)-lactate from pyruvate: step 1/1.</text>
</comment>
<comment type="subunit">
    <text evidence="1">Homotetramer.</text>
</comment>
<comment type="subcellular location">
    <subcellularLocation>
        <location evidence="1">Cytoplasm</location>
    </subcellularLocation>
</comment>
<comment type="similarity">
    <text evidence="2">Belongs to the LDH/MDH superfamily. LDH family.</text>
</comment>
<reference key="1">
    <citation type="journal article" date="2002" name="Nature">
        <title>The genome sequence of Schizosaccharomyces pombe.</title>
        <authorList>
            <person name="Wood V."/>
            <person name="Gwilliam R."/>
            <person name="Rajandream M.A."/>
            <person name="Lyne M.H."/>
            <person name="Lyne R."/>
            <person name="Stewart A."/>
            <person name="Sgouros J.G."/>
            <person name="Peat N."/>
            <person name="Hayles J."/>
            <person name="Baker S.G."/>
            <person name="Basham D."/>
            <person name="Bowman S."/>
            <person name="Brooks K."/>
            <person name="Brown D."/>
            <person name="Brown S."/>
            <person name="Chillingworth T."/>
            <person name="Churcher C.M."/>
            <person name="Collins M."/>
            <person name="Connor R."/>
            <person name="Cronin A."/>
            <person name="Davis P."/>
            <person name="Feltwell T."/>
            <person name="Fraser A."/>
            <person name="Gentles S."/>
            <person name="Goble A."/>
            <person name="Hamlin N."/>
            <person name="Harris D.E."/>
            <person name="Hidalgo J."/>
            <person name="Hodgson G."/>
            <person name="Holroyd S."/>
            <person name="Hornsby T."/>
            <person name="Howarth S."/>
            <person name="Huckle E.J."/>
            <person name="Hunt S."/>
            <person name="Jagels K."/>
            <person name="James K.D."/>
            <person name="Jones L."/>
            <person name="Jones M."/>
            <person name="Leather S."/>
            <person name="McDonald S."/>
            <person name="McLean J."/>
            <person name="Mooney P."/>
            <person name="Moule S."/>
            <person name="Mungall K.L."/>
            <person name="Murphy L.D."/>
            <person name="Niblett D."/>
            <person name="Odell C."/>
            <person name="Oliver K."/>
            <person name="O'Neil S."/>
            <person name="Pearson D."/>
            <person name="Quail M.A."/>
            <person name="Rabbinowitsch E."/>
            <person name="Rutherford K.M."/>
            <person name="Rutter S."/>
            <person name="Saunders D."/>
            <person name="Seeger K."/>
            <person name="Sharp S."/>
            <person name="Skelton J."/>
            <person name="Simmonds M.N."/>
            <person name="Squares R."/>
            <person name="Squares S."/>
            <person name="Stevens K."/>
            <person name="Taylor K."/>
            <person name="Taylor R.G."/>
            <person name="Tivey A."/>
            <person name="Walsh S.V."/>
            <person name="Warren T."/>
            <person name="Whitehead S."/>
            <person name="Woodward J.R."/>
            <person name="Volckaert G."/>
            <person name="Aert R."/>
            <person name="Robben J."/>
            <person name="Grymonprez B."/>
            <person name="Weltjens I."/>
            <person name="Vanstreels E."/>
            <person name="Rieger M."/>
            <person name="Schaefer M."/>
            <person name="Mueller-Auer S."/>
            <person name="Gabel C."/>
            <person name="Fuchs M."/>
            <person name="Duesterhoeft A."/>
            <person name="Fritzc C."/>
            <person name="Holzer E."/>
            <person name="Moestl D."/>
            <person name="Hilbert H."/>
            <person name="Borzym K."/>
            <person name="Langer I."/>
            <person name="Beck A."/>
            <person name="Lehrach H."/>
            <person name="Reinhardt R."/>
            <person name="Pohl T.M."/>
            <person name="Eger P."/>
            <person name="Zimmermann W."/>
            <person name="Wedler H."/>
            <person name="Wambutt R."/>
            <person name="Purnelle B."/>
            <person name="Goffeau A."/>
            <person name="Cadieu E."/>
            <person name="Dreano S."/>
            <person name="Gloux S."/>
            <person name="Lelaure V."/>
            <person name="Mottier S."/>
            <person name="Galibert F."/>
            <person name="Aves S.J."/>
            <person name="Xiang Z."/>
            <person name="Hunt C."/>
            <person name="Moore K."/>
            <person name="Hurst S.M."/>
            <person name="Lucas M."/>
            <person name="Rochet M."/>
            <person name="Gaillardin C."/>
            <person name="Tallada V.A."/>
            <person name="Garzon A."/>
            <person name="Thode G."/>
            <person name="Daga R.R."/>
            <person name="Cruzado L."/>
            <person name="Jimenez J."/>
            <person name="Sanchez M."/>
            <person name="del Rey F."/>
            <person name="Benito J."/>
            <person name="Dominguez A."/>
            <person name="Revuelta J.L."/>
            <person name="Moreno S."/>
            <person name="Armstrong J."/>
            <person name="Forsburg S.L."/>
            <person name="Cerutti L."/>
            <person name="Lowe T."/>
            <person name="McCombie W.R."/>
            <person name="Paulsen I."/>
            <person name="Potashkin J."/>
            <person name="Shpakovski G.V."/>
            <person name="Ussery D."/>
            <person name="Barrell B.G."/>
            <person name="Nurse P."/>
        </authorList>
    </citation>
    <scope>NUCLEOTIDE SEQUENCE [LARGE SCALE GENOMIC DNA]</scope>
    <source>
        <strain>972 / ATCC 24843</strain>
    </source>
</reference>
<feature type="chain" id="PRO_0000168500" description="Probable L-lactate dehydrogenase">
    <location>
        <begin position="1"/>
        <end position="330"/>
    </location>
</feature>
<feature type="active site" description="Proton acceptor" evidence="1">
    <location>
        <position position="192"/>
    </location>
</feature>
<feature type="binding site" evidence="1">
    <location>
        <position position="105"/>
    </location>
    <ligand>
        <name>substrate</name>
    </ligand>
</feature>
<feature type="binding site" evidence="1">
    <location>
        <position position="137"/>
    </location>
    <ligand>
        <name>NAD(+)</name>
        <dbReference type="ChEBI" id="CHEBI:57540"/>
    </ligand>
</feature>
<feature type="binding site" evidence="1">
    <location>
        <position position="137"/>
    </location>
    <ligand>
        <name>substrate</name>
    </ligand>
</feature>
<feature type="binding site" evidence="1">
    <location>
        <position position="168"/>
    </location>
    <ligand>
        <name>substrate</name>
    </ligand>
</feature>
<dbReference type="EC" id="1.1.1.27"/>
<dbReference type="EMBL" id="CU329670">
    <property type="protein sequence ID" value="CAB75872.1"/>
    <property type="molecule type" value="Genomic_DNA"/>
</dbReference>
<dbReference type="PIR" id="T50135">
    <property type="entry name" value="T50135"/>
</dbReference>
<dbReference type="RefSeq" id="NP_595026.1">
    <property type="nucleotide sequence ID" value="NM_001020456.1"/>
</dbReference>
<dbReference type="SMR" id="Q9P7P7"/>
<dbReference type="BioGRID" id="279025">
    <property type="interactions" value="11"/>
</dbReference>
<dbReference type="FunCoup" id="Q9P7P7">
    <property type="interactions" value="109"/>
</dbReference>
<dbReference type="STRING" id="284812.Q9P7P7"/>
<dbReference type="PaxDb" id="4896-SPAC186.08c.1"/>
<dbReference type="EnsemblFungi" id="SPAC186.08c.1">
    <property type="protein sequence ID" value="SPAC186.08c.1:pep"/>
    <property type="gene ID" value="SPAC186.08c"/>
</dbReference>
<dbReference type="KEGG" id="spo:2542569"/>
<dbReference type="PomBase" id="SPAC186.08c"/>
<dbReference type="VEuPathDB" id="FungiDB:SPAC186.08c"/>
<dbReference type="eggNOG" id="KOG1495">
    <property type="taxonomic scope" value="Eukaryota"/>
</dbReference>
<dbReference type="HOGENOM" id="CLU_045401_1_1_1"/>
<dbReference type="InParanoid" id="Q9P7P7"/>
<dbReference type="OMA" id="EWDLDDY"/>
<dbReference type="PhylomeDB" id="Q9P7P7"/>
<dbReference type="UniPathway" id="UPA00554">
    <property type="reaction ID" value="UER00611"/>
</dbReference>
<dbReference type="PRO" id="PR:Q9P7P7"/>
<dbReference type="Proteomes" id="UP000002485">
    <property type="component" value="Chromosome I"/>
</dbReference>
<dbReference type="GO" id="GO:0005829">
    <property type="term" value="C:cytosol"/>
    <property type="evidence" value="ECO:0007005"/>
    <property type="project" value="PomBase"/>
</dbReference>
<dbReference type="GO" id="GO:0005634">
    <property type="term" value="C:nucleus"/>
    <property type="evidence" value="ECO:0007005"/>
    <property type="project" value="PomBase"/>
</dbReference>
<dbReference type="GO" id="GO:0004459">
    <property type="term" value="F:L-lactate dehydrogenase activity"/>
    <property type="evidence" value="ECO:0000318"/>
    <property type="project" value="GO_Central"/>
</dbReference>
<dbReference type="GO" id="GO:1990748">
    <property type="term" value="P:cellular detoxification"/>
    <property type="evidence" value="ECO:0000303"/>
    <property type="project" value="PomBase"/>
</dbReference>
<dbReference type="GO" id="GO:0006113">
    <property type="term" value="P:fermentation"/>
    <property type="evidence" value="ECO:0000305"/>
    <property type="project" value="PomBase"/>
</dbReference>
<dbReference type="GO" id="GO:0006089">
    <property type="term" value="P:lactate metabolic process"/>
    <property type="evidence" value="ECO:0000318"/>
    <property type="project" value="GO_Central"/>
</dbReference>
<dbReference type="GO" id="GO:0006090">
    <property type="term" value="P:pyruvate metabolic process"/>
    <property type="evidence" value="ECO:0000318"/>
    <property type="project" value="GO_Central"/>
</dbReference>
<dbReference type="CDD" id="cd05292">
    <property type="entry name" value="LDH_2"/>
    <property type="match status" value="1"/>
</dbReference>
<dbReference type="FunFam" id="3.40.50.720:FF:000018">
    <property type="entry name" value="Malate dehydrogenase"/>
    <property type="match status" value="1"/>
</dbReference>
<dbReference type="Gene3D" id="3.90.110.10">
    <property type="entry name" value="Lactate dehydrogenase/glycoside hydrolase, family 4, C-terminal"/>
    <property type="match status" value="1"/>
</dbReference>
<dbReference type="Gene3D" id="3.40.50.720">
    <property type="entry name" value="NAD(P)-binding Rossmann-like Domain"/>
    <property type="match status" value="1"/>
</dbReference>
<dbReference type="HAMAP" id="MF_00488">
    <property type="entry name" value="Lactate_dehydrog"/>
    <property type="match status" value="1"/>
</dbReference>
<dbReference type="InterPro" id="IPR001557">
    <property type="entry name" value="L-lactate/malate_DH"/>
</dbReference>
<dbReference type="InterPro" id="IPR011304">
    <property type="entry name" value="L-lactate_DH"/>
</dbReference>
<dbReference type="InterPro" id="IPR018177">
    <property type="entry name" value="L-lactate_DH_AS"/>
</dbReference>
<dbReference type="InterPro" id="IPR022383">
    <property type="entry name" value="Lactate/malate_DH_C"/>
</dbReference>
<dbReference type="InterPro" id="IPR001236">
    <property type="entry name" value="Lactate/malate_DH_N"/>
</dbReference>
<dbReference type="InterPro" id="IPR015955">
    <property type="entry name" value="Lactate_DH/Glyco_Ohase_4_C"/>
</dbReference>
<dbReference type="InterPro" id="IPR036291">
    <property type="entry name" value="NAD(P)-bd_dom_sf"/>
</dbReference>
<dbReference type="NCBIfam" id="TIGR01771">
    <property type="entry name" value="L-LDH-NAD"/>
    <property type="match status" value="1"/>
</dbReference>
<dbReference type="NCBIfam" id="NF000824">
    <property type="entry name" value="PRK00066.1"/>
    <property type="match status" value="1"/>
</dbReference>
<dbReference type="PANTHER" id="PTHR43128">
    <property type="entry name" value="L-2-HYDROXYCARBOXYLATE DEHYDROGENASE (NAD(P)(+))"/>
    <property type="match status" value="1"/>
</dbReference>
<dbReference type="PANTHER" id="PTHR43128:SF16">
    <property type="entry name" value="L-LACTATE DEHYDROGENASE"/>
    <property type="match status" value="1"/>
</dbReference>
<dbReference type="Pfam" id="PF02866">
    <property type="entry name" value="Ldh_1_C"/>
    <property type="match status" value="1"/>
</dbReference>
<dbReference type="Pfam" id="PF00056">
    <property type="entry name" value="Ldh_1_N"/>
    <property type="match status" value="1"/>
</dbReference>
<dbReference type="PIRSF" id="PIRSF000102">
    <property type="entry name" value="Lac_mal_DH"/>
    <property type="match status" value="1"/>
</dbReference>
<dbReference type="PRINTS" id="PR00086">
    <property type="entry name" value="LLDHDRGNASE"/>
</dbReference>
<dbReference type="SUPFAM" id="SSF56327">
    <property type="entry name" value="LDH C-terminal domain-like"/>
    <property type="match status" value="1"/>
</dbReference>
<dbReference type="SUPFAM" id="SSF51735">
    <property type="entry name" value="NAD(P)-binding Rossmann-fold domains"/>
    <property type="match status" value="1"/>
</dbReference>
<dbReference type="PROSITE" id="PS00064">
    <property type="entry name" value="L_LDH"/>
    <property type="match status" value="1"/>
</dbReference>
<evidence type="ECO:0000250" key="1"/>
<evidence type="ECO:0000305" key="2"/>
<name>LDH_SCHPO</name>
<proteinExistence type="inferred from homology"/>
<keyword id="KW-0963">Cytoplasm</keyword>
<keyword id="KW-0520">NAD</keyword>
<keyword id="KW-0560">Oxidoreductase</keyword>
<keyword id="KW-1185">Reference proteome</keyword>
<sequence>MTAGSKVFSNDSVRSSSFKSIKIVIVGAGNVGSTTAFTLLLSGLAAEIVIIDLNKKKAEGEAMDLNHAAPLSHETRVYLGDYKDCKDATAVVITAGKNQKPGETRMDLLKANISIFKEILREVTKYTKDAILLVATNPVDVLTYATLKLTGFPAERVIGSGTIIDTARFQYLIGKLYGLDPQSVNADIIGEHGDSELAVWSHASIAGLSLADFCEESETKYDEQALNECFKETKNAAYDIIQRKGSTEYGVAAGLVRILAAIIRDENALLTVSGLDSYSNIGDVCFSMPRKLNKDGAHRIINAKLSKDEDAKLVESVKSIKHAIESIGLN</sequence>
<accession>Q9P7P7</accession>
<gene>
    <name type="ORF">SPAC186.08c</name>
</gene>
<protein>
    <recommendedName>
        <fullName>Probable L-lactate dehydrogenase</fullName>
        <shortName>L-LDH</shortName>
        <ecNumber>1.1.1.27</ecNumber>
    </recommendedName>
</protein>